<organism>
    <name type="scientific">Escherichia coli O6:H1 (strain CFT073 / ATCC 700928 / UPEC)</name>
    <dbReference type="NCBI Taxonomy" id="199310"/>
    <lineage>
        <taxon>Bacteria</taxon>
        <taxon>Pseudomonadati</taxon>
        <taxon>Pseudomonadota</taxon>
        <taxon>Gammaproteobacteria</taxon>
        <taxon>Enterobacterales</taxon>
        <taxon>Enterobacteriaceae</taxon>
        <taxon>Escherichia</taxon>
    </lineage>
</organism>
<feature type="chain" id="PRO_0000179349" description="Trigger factor">
    <location>
        <begin position="1"/>
        <end position="432"/>
    </location>
</feature>
<feature type="domain" description="PPIase FKBP-type" evidence="1">
    <location>
        <begin position="161"/>
        <end position="246"/>
    </location>
</feature>
<protein>
    <recommendedName>
        <fullName evidence="1">Trigger factor</fullName>
        <shortName evidence="1">TF</shortName>
        <ecNumber evidence="1">5.2.1.8</ecNumber>
    </recommendedName>
    <alternativeName>
        <fullName evidence="1">PPIase</fullName>
    </alternativeName>
</protein>
<reference key="1">
    <citation type="journal article" date="2002" name="Proc. Natl. Acad. Sci. U.S.A.">
        <title>Extensive mosaic structure revealed by the complete genome sequence of uropathogenic Escherichia coli.</title>
        <authorList>
            <person name="Welch R.A."/>
            <person name="Burland V."/>
            <person name="Plunkett G. III"/>
            <person name="Redford P."/>
            <person name="Roesch P."/>
            <person name="Rasko D."/>
            <person name="Buckles E.L."/>
            <person name="Liou S.-R."/>
            <person name="Boutin A."/>
            <person name="Hackett J."/>
            <person name="Stroud D."/>
            <person name="Mayhew G.F."/>
            <person name="Rose D.J."/>
            <person name="Zhou S."/>
            <person name="Schwartz D.C."/>
            <person name="Perna N.T."/>
            <person name="Mobley H.L.T."/>
            <person name="Donnenberg M.S."/>
            <person name="Blattner F.R."/>
        </authorList>
    </citation>
    <scope>NUCLEOTIDE SEQUENCE [LARGE SCALE GENOMIC DNA]</scope>
    <source>
        <strain>CFT073 / ATCC 700928 / UPEC</strain>
    </source>
</reference>
<dbReference type="EC" id="5.2.1.8" evidence="1"/>
<dbReference type="EMBL" id="AE014075">
    <property type="protein sequence ID" value="AAN79029.1"/>
    <property type="molecule type" value="Genomic_DNA"/>
</dbReference>
<dbReference type="RefSeq" id="WP_001198388.1">
    <property type="nucleotide sequence ID" value="NZ_CP051263.1"/>
</dbReference>
<dbReference type="SMR" id="Q8FKA7"/>
<dbReference type="STRING" id="199310.c0551"/>
<dbReference type="KEGG" id="ecc:c0551"/>
<dbReference type="eggNOG" id="COG0544">
    <property type="taxonomic scope" value="Bacteria"/>
</dbReference>
<dbReference type="HOGENOM" id="CLU_033058_2_0_6"/>
<dbReference type="BioCyc" id="ECOL199310:C0551-MONOMER"/>
<dbReference type="Proteomes" id="UP000001410">
    <property type="component" value="Chromosome"/>
</dbReference>
<dbReference type="GO" id="GO:0005737">
    <property type="term" value="C:cytoplasm"/>
    <property type="evidence" value="ECO:0007669"/>
    <property type="project" value="UniProtKB-SubCell"/>
</dbReference>
<dbReference type="GO" id="GO:0003755">
    <property type="term" value="F:peptidyl-prolyl cis-trans isomerase activity"/>
    <property type="evidence" value="ECO:0007669"/>
    <property type="project" value="UniProtKB-UniRule"/>
</dbReference>
<dbReference type="GO" id="GO:0044183">
    <property type="term" value="F:protein folding chaperone"/>
    <property type="evidence" value="ECO:0007669"/>
    <property type="project" value="TreeGrafter"/>
</dbReference>
<dbReference type="GO" id="GO:0043022">
    <property type="term" value="F:ribosome binding"/>
    <property type="evidence" value="ECO:0007669"/>
    <property type="project" value="TreeGrafter"/>
</dbReference>
<dbReference type="GO" id="GO:0051083">
    <property type="term" value="P:'de novo' cotranslational protein folding"/>
    <property type="evidence" value="ECO:0007669"/>
    <property type="project" value="TreeGrafter"/>
</dbReference>
<dbReference type="GO" id="GO:0051301">
    <property type="term" value="P:cell division"/>
    <property type="evidence" value="ECO:0007669"/>
    <property type="project" value="UniProtKB-KW"/>
</dbReference>
<dbReference type="GO" id="GO:0061077">
    <property type="term" value="P:chaperone-mediated protein folding"/>
    <property type="evidence" value="ECO:0007669"/>
    <property type="project" value="TreeGrafter"/>
</dbReference>
<dbReference type="GO" id="GO:0015031">
    <property type="term" value="P:protein transport"/>
    <property type="evidence" value="ECO:0007669"/>
    <property type="project" value="UniProtKB-UniRule"/>
</dbReference>
<dbReference type="GO" id="GO:0043335">
    <property type="term" value="P:protein unfolding"/>
    <property type="evidence" value="ECO:0007669"/>
    <property type="project" value="TreeGrafter"/>
</dbReference>
<dbReference type="FunFam" id="1.10.3120.10:FF:000001">
    <property type="entry name" value="Trigger factor"/>
    <property type="match status" value="1"/>
</dbReference>
<dbReference type="FunFam" id="3.10.50.40:FF:000001">
    <property type="entry name" value="Trigger factor"/>
    <property type="match status" value="1"/>
</dbReference>
<dbReference type="FunFam" id="3.30.70.1050:FF:000001">
    <property type="entry name" value="Trigger factor"/>
    <property type="match status" value="1"/>
</dbReference>
<dbReference type="Gene3D" id="3.10.50.40">
    <property type="match status" value="1"/>
</dbReference>
<dbReference type="Gene3D" id="3.30.70.1050">
    <property type="entry name" value="Trigger factor ribosome-binding domain"/>
    <property type="match status" value="1"/>
</dbReference>
<dbReference type="Gene3D" id="1.10.3120.10">
    <property type="entry name" value="Trigger factor, C-terminal domain"/>
    <property type="match status" value="1"/>
</dbReference>
<dbReference type="HAMAP" id="MF_00303">
    <property type="entry name" value="Trigger_factor_Tig"/>
    <property type="match status" value="1"/>
</dbReference>
<dbReference type="InterPro" id="IPR046357">
    <property type="entry name" value="PPIase_dom_sf"/>
</dbReference>
<dbReference type="InterPro" id="IPR001179">
    <property type="entry name" value="PPIase_FKBP_dom"/>
</dbReference>
<dbReference type="InterPro" id="IPR005215">
    <property type="entry name" value="Trig_fac"/>
</dbReference>
<dbReference type="InterPro" id="IPR008880">
    <property type="entry name" value="Trigger_fac_C"/>
</dbReference>
<dbReference type="InterPro" id="IPR037041">
    <property type="entry name" value="Trigger_fac_C_sf"/>
</dbReference>
<dbReference type="InterPro" id="IPR008881">
    <property type="entry name" value="Trigger_fac_ribosome-bd_bac"/>
</dbReference>
<dbReference type="InterPro" id="IPR036611">
    <property type="entry name" value="Trigger_fac_ribosome-bd_sf"/>
</dbReference>
<dbReference type="InterPro" id="IPR027304">
    <property type="entry name" value="Trigger_fact/SurA_dom_sf"/>
</dbReference>
<dbReference type="NCBIfam" id="TIGR00115">
    <property type="entry name" value="tig"/>
    <property type="match status" value="1"/>
</dbReference>
<dbReference type="PANTHER" id="PTHR30560">
    <property type="entry name" value="TRIGGER FACTOR CHAPERONE AND PEPTIDYL-PROLYL CIS/TRANS ISOMERASE"/>
    <property type="match status" value="1"/>
</dbReference>
<dbReference type="PANTHER" id="PTHR30560:SF3">
    <property type="entry name" value="TRIGGER FACTOR-LIKE PROTEIN TIG, CHLOROPLASTIC"/>
    <property type="match status" value="1"/>
</dbReference>
<dbReference type="Pfam" id="PF00254">
    <property type="entry name" value="FKBP_C"/>
    <property type="match status" value="1"/>
</dbReference>
<dbReference type="Pfam" id="PF05698">
    <property type="entry name" value="Trigger_C"/>
    <property type="match status" value="1"/>
</dbReference>
<dbReference type="Pfam" id="PF05697">
    <property type="entry name" value="Trigger_N"/>
    <property type="match status" value="1"/>
</dbReference>
<dbReference type="PIRSF" id="PIRSF003095">
    <property type="entry name" value="Trigger_factor"/>
    <property type="match status" value="1"/>
</dbReference>
<dbReference type="SUPFAM" id="SSF54534">
    <property type="entry name" value="FKBP-like"/>
    <property type="match status" value="1"/>
</dbReference>
<dbReference type="SUPFAM" id="SSF109998">
    <property type="entry name" value="Triger factor/SurA peptide-binding domain-like"/>
    <property type="match status" value="1"/>
</dbReference>
<dbReference type="SUPFAM" id="SSF102735">
    <property type="entry name" value="Trigger factor ribosome-binding domain"/>
    <property type="match status" value="1"/>
</dbReference>
<dbReference type="PROSITE" id="PS50059">
    <property type="entry name" value="FKBP_PPIASE"/>
    <property type="match status" value="1"/>
</dbReference>
<gene>
    <name evidence="1" type="primary">tig</name>
    <name type="ordered locus">c0551</name>
</gene>
<keyword id="KW-0131">Cell cycle</keyword>
<keyword id="KW-0132">Cell division</keyword>
<keyword id="KW-0143">Chaperone</keyword>
<keyword id="KW-0963">Cytoplasm</keyword>
<keyword id="KW-0413">Isomerase</keyword>
<keyword id="KW-1185">Reference proteome</keyword>
<keyword id="KW-0697">Rotamase</keyword>
<comment type="function">
    <text evidence="1">Involved in protein export. Acts as a chaperone by maintaining the newly synthesized protein in an open conformation. Functions as a peptidyl-prolyl cis-trans isomerase.</text>
</comment>
<comment type="catalytic activity">
    <reaction evidence="1">
        <text>[protein]-peptidylproline (omega=180) = [protein]-peptidylproline (omega=0)</text>
        <dbReference type="Rhea" id="RHEA:16237"/>
        <dbReference type="Rhea" id="RHEA-COMP:10747"/>
        <dbReference type="Rhea" id="RHEA-COMP:10748"/>
        <dbReference type="ChEBI" id="CHEBI:83833"/>
        <dbReference type="ChEBI" id="CHEBI:83834"/>
        <dbReference type="EC" id="5.2.1.8"/>
    </reaction>
</comment>
<comment type="subunit">
    <text evidence="1">Homodimer and monomer. In vivo most of the ribosomes are in complex with monomeric TF. Uncomplexed TF, however, is in a monomer-dimer equilibrium with approximately two thirds of TF existing in a dimeric state.</text>
</comment>
<comment type="subcellular location">
    <subcellularLocation>
        <location>Cytoplasm</location>
    </subcellularLocation>
    <text evidence="1">About half TF is bound to the ribosome near the polypeptide exit tunnel while the other half is free in the cytoplasm.</text>
</comment>
<comment type="domain">
    <text evidence="1">Consists of 3 domains; the N-terminus binds the ribosome, the middle domain has PPIase activity, while the C-terminus has intrinsic chaperone activity on its own.</text>
</comment>
<comment type="similarity">
    <text evidence="1">Belongs to the FKBP-type PPIase family. Tig subfamily.</text>
</comment>
<sequence>MQVSVETTQGLGRRVTITIAADSIETAVKSELVNVAKKVRIDGFRKGKVPMNIVAQRYGASVRQDVLGDLMSRNFIDAIIKEKINPAGAPTYVPGEYKLGEDFTYSVEFEVYPEVELQGLEAIEVEKPIVEVTDADVDGMLDTLRKQQATWKEKDGAVEAEDRVTIDFTGSVDGEEFEGGKASDFVLAMGQGRMIPGFEDGIKGHKAGEEFTIDVTFPEEYHAENLKGKAAKFAINLKKVEERELPELTEEFIKRFGVEDGSVEGLRAEVRKNMERELKSAIRNRVKSQAIEGLVKANDIDVPAALIDSEIDVLRRQAAQRFGGNEKQALELPRELFEEQAKRRVVVGLLLGEVIRTNELKADEERVKGLIEEMASAYEDPKEVIEFYSKNKELMDNMRNVALEEQAVEAVLAKAKVTEKETTFNELMNQQA</sequence>
<accession>Q8FKA7</accession>
<evidence type="ECO:0000255" key="1">
    <source>
        <dbReference type="HAMAP-Rule" id="MF_00303"/>
    </source>
</evidence>
<proteinExistence type="inferred from homology"/>
<name>TIG_ECOL6</name>